<proteinExistence type="inferred from homology"/>
<keyword id="KW-0281">Fimbrium</keyword>
<keyword id="KW-1185">Reference proteome</keyword>
<keyword id="KW-0964">Secreted</keyword>
<keyword id="KW-0843">Virulence</keyword>
<organism>
    <name type="scientific">Pectobacterium atrosepticum (strain SCRI 1043 / ATCC BAA-672)</name>
    <name type="common">Erwinia carotovora subsp. atroseptica</name>
    <dbReference type="NCBI Taxonomy" id="218491"/>
    <lineage>
        <taxon>Bacteria</taxon>
        <taxon>Pseudomonadati</taxon>
        <taxon>Pseudomonadota</taxon>
        <taxon>Gammaproteobacteria</taxon>
        <taxon>Enterobacterales</taxon>
        <taxon>Pectobacteriaceae</taxon>
        <taxon>Pectobacterium</taxon>
    </lineage>
</organism>
<evidence type="ECO:0000250" key="1"/>
<evidence type="ECO:0000305" key="2"/>
<comment type="function">
    <text evidence="1">Major structure protein of the hrp pilus, which is a component of the type III secretion system (T3SS, Hrp secretion system) required for effector protein delivery, parasitism, and pathogenicity. The hrp pilus functions as a conduit for protein delivery into the host cell (By similarity).</text>
</comment>
<comment type="subcellular location">
    <subcellularLocation>
        <location evidence="1">Secreted</location>
    </subcellularLocation>
    <subcellularLocation>
        <location evidence="1">Fimbrium</location>
    </subcellularLocation>
    <text evidence="1">Extracellular and secreted via type III secretion system.</text>
</comment>
<comment type="similarity">
    <text evidence="2">Belongs to the HrpA type 2 family.</text>
</comment>
<sequence>MALGLSQVASQAASQTLDTAMAGSLTRAAGAQAQKIALDTENSILDGQMDSASKSLNSGQKAAKAIQF</sequence>
<feature type="chain" id="PRO_0000226253" description="Hrp pili protein HrpA">
    <location>
        <begin position="1"/>
        <end position="68"/>
    </location>
</feature>
<name>HRPA_PECAS</name>
<reference key="1">
    <citation type="journal article" date="2004" name="Mol. Plant Microbe Interact.">
        <title>Use of a pooled transposon mutation grid to demonstrate roles in disease development for Erwinia carotovora subsp. atroseptica putative type III secreted effector (DspE/A) and helper (HrpN) proteins.</title>
        <authorList>
            <person name="Holeva M.C."/>
            <person name="Bell K.S."/>
            <person name="Hyman L.J."/>
            <person name="Avrova A.O."/>
            <person name="Whisson S.C."/>
            <person name="Birch P.R."/>
            <person name="Toth I.K."/>
        </authorList>
    </citation>
    <scope>NUCLEOTIDE SEQUENCE [GENOMIC DNA]</scope>
    <source>
        <strain>SCRI 1039 / ATCC BAA-673</strain>
    </source>
</reference>
<reference key="2">
    <citation type="journal article" date="2004" name="Proc. Natl. Acad. Sci. U.S.A.">
        <title>Genome sequence of the enterobacterial phytopathogen Erwinia carotovora subsp. atroseptica and characterization of virulence factors.</title>
        <authorList>
            <person name="Bell K.S."/>
            <person name="Sebaihia M."/>
            <person name="Pritchard L."/>
            <person name="Holden M.T.G."/>
            <person name="Hyman L.J."/>
            <person name="Holeva M.C."/>
            <person name="Thomson N.R."/>
            <person name="Bentley S.D."/>
            <person name="Churcher L.J.C."/>
            <person name="Mungall K."/>
            <person name="Atkin R."/>
            <person name="Bason N."/>
            <person name="Brooks K."/>
            <person name="Chillingworth T."/>
            <person name="Clark K."/>
            <person name="Doggett J."/>
            <person name="Fraser A."/>
            <person name="Hance Z."/>
            <person name="Hauser H."/>
            <person name="Jagels K."/>
            <person name="Moule S."/>
            <person name="Norbertczak H."/>
            <person name="Ormond D."/>
            <person name="Price C."/>
            <person name="Quail M.A."/>
            <person name="Sanders M."/>
            <person name="Walker D."/>
            <person name="Whitehead S."/>
            <person name="Salmond G.P.C."/>
            <person name="Birch P.R.J."/>
            <person name="Parkhill J."/>
            <person name="Toth I.K."/>
        </authorList>
    </citation>
    <scope>NUCLEOTIDE SEQUENCE [LARGE SCALE GENOMIC DNA]</scope>
    <source>
        <strain>SCRI 1043 / ATCC BAA-672</strain>
    </source>
</reference>
<dbReference type="EMBL" id="AY496066">
    <property type="protein sequence ID" value="AAS20371.1"/>
    <property type="molecule type" value="Genomic_DNA"/>
</dbReference>
<dbReference type="EMBL" id="BX950851">
    <property type="protein sequence ID" value="CAG74995.1"/>
    <property type="molecule type" value="Genomic_DNA"/>
</dbReference>
<dbReference type="RefSeq" id="WP_009112561.1">
    <property type="nucleotide sequence ID" value="NC_004547.2"/>
</dbReference>
<dbReference type="STRING" id="218491.ECA2093"/>
<dbReference type="KEGG" id="eca:ECA2093"/>
<dbReference type="eggNOG" id="ENOG5033M1A">
    <property type="taxonomic scope" value="Bacteria"/>
</dbReference>
<dbReference type="HOGENOM" id="CLU_188357_1_0_6"/>
<dbReference type="OrthoDB" id="6522517at2"/>
<dbReference type="Proteomes" id="UP000007966">
    <property type="component" value="Chromosome"/>
</dbReference>
<dbReference type="GO" id="GO:0005576">
    <property type="term" value="C:extracellular region"/>
    <property type="evidence" value="ECO:0007669"/>
    <property type="project" value="UniProtKB-SubCell"/>
</dbReference>
<dbReference type="GO" id="GO:0009289">
    <property type="term" value="C:pilus"/>
    <property type="evidence" value="ECO:0007669"/>
    <property type="project" value="UniProtKB-SubCell"/>
</dbReference>
<accession>Q6RK33</accession>
<accession>Q6D5E7</accession>
<gene>
    <name type="primary">hrpA</name>
    <name type="ordered locus">ECA2093</name>
</gene>
<protein>
    <recommendedName>
        <fullName>Hrp pili protein HrpA</fullName>
    </recommendedName>
    <alternativeName>
        <fullName>T3SS pilin HrpA</fullName>
    </alternativeName>
</protein>